<evidence type="ECO:0000250" key="1">
    <source>
        <dbReference type="UniProtKB" id="Q969F2"/>
    </source>
</evidence>
<evidence type="ECO:0000255" key="2"/>
<evidence type="ECO:0000255" key="3">
    <source>
        <dbReference type="PROSITE-ProRule" id="PRU00448"/>
    </source>
</evidence>
<evidence type="ECO:0000256" key="4">
    <source>
        <dbReference type="SAM" id="MobiDB-lite"/>
    </source>
</evidence>
<evidence type="ECO:0000269" key="5">
    <source>
    </source>
</evidence>
<evidence type="ECO:0000305" key="6"/>
<gene>
    <name type="primary">nkd2</name>
    <name type="synonym">nkd2a</name>
</gene>
<keyword id="KW-0106">Calcium</keyword>
<keyword id="KW-1003">Cell membrane</keyword>
<keyword id="KW-0963">Cytoplasm</keyword>
<keyword id="KW-0449">Lipoprotein</keyword>
<keyword id="KW-0472">Membrane</keyword>
<keyword id="KW-0479">Metal-binding</keyword>
<keyword id="KW-0519">Myristate</keyword>
<keyword id="KW-1185">Reference proteome</keyword>
<keyword id="KW-0879">Wnt signaling pathway</keyword>
<reference key="1">
    <citation type="journal article" date="2007" name="Dev. Biol.">
        <title>Zebrafish Naked1 and Naked2 antagonize both canonical and non-canonical Wnt signaling.</title>
        <authorList>
            <person name="Van Raay T.J."/>
            <person name="Coffey R.J."/>
            <person name="Solnica-Krezel L."/>
        </authorList>
    </citation>
    <scope>NUCLEOTIDE SEQUENCE [MRNA]</scope>
    <scope>FUNCTION</scope>
    <scope>TISSUE SPECIFICITY</scope>
    <scope>DEVELOPMENTAL STAGE</scope>
</reference>
<dbReference type="EMBL" id="EF192161">
    <property type="protein sequence ID" value="ABP35564.1"/>
    <property type="molecule type" value="mRNA"/>
</dbReference>
<dbReference type="RefSeq" id="NP_001091667.1">
    <property type="nucleotide sequence ID" value="NM_001098197.1"/>
</dbReference>
<dbReference type="BioGRID" id="673849">
    <property type="interactions" value="1"/>
</dbReference>
<dbReference type="FunCoup" id="A4ZNR4">
    <property type="interactions" value="336"/>
</dbReference>
<dbReference type="GeneID" id="100049175"/>
<dbReference type="KEGG" id="dre:100049175"/>
<dbReference type="AGR" id="ZFIN:ZDB-GENE-071130-1"/>
<dbReference type="CTD" id="100049175"/>
<dbReference type="ZFIN" id="ZDB-GENE-071130-1">
    <property type="gene designation" value="nkd2a"/>
</dbReference>
<dbReference type="InParanoid" id="A4ZNR4"/>
<dbReference type="PRO" id="PR:A4ZNR4"/>
<dbReference type="Proteomes" id="UP000000437">
    <property type="component" value="Unplaced"/>
</dbReference>
<dbReference type="GO" id="GO:0005737">
    <property type="term" value="C:cytoplasm"/>
    <property type="evidence" value="ECO:0000318"/>
    <property type="project" value="GO_Central"/>
</dbReference>
<dbReference type="GO" id="GO:0005886">
    <property type="term" value="C:plasma membrane"/>
    <property type="evidence" value="ECO:0007669"/>
    <property type="project" value="UniProtKB-SubCell"/>
</dbReference>
<dbReference type="GO" id="GO:0005509">
    <property type="term" value="F:calcium ion binding"/>
    <property type="evidence" value="ECO:0007669"/>
    <property type="project" value="InterPro"/>
</dbReference>
<dbReference type="GO" id="GO:0070121">
    <property type="term" value="P:Kupffer's vesicle development"/>
    <property type="evidence" value="ECO:0000315"/>
    <property type="project" value="ZFIN"/>
</dbReference>
<dbReference type="GO" id="GO:0090090">
    <property type="term" value="P:negative regulation of canonical Wnt signaling pathway"/>
    <property type="evidence" value="ECO:0000316"/>
    <property type="project" value="ZFIN"/>
</dbReference>
<dbReference type="GO" id="GO:0030178">
    <property type="term" value="P:negative regulation of Wnt signaling pathway"/>
    <property type="evidence" value="ECO:0000318"/>
    <property type="project" value="GO_Central"/>
</dbReference>
<dbReference type="GO" id="GO:0060061">
    <property type="term" value="P:Spemann organizer formation"/>
    <property type="evidence" value="ECO:0000315"/>
    <property type="project" value="ZFIN"/>
</dbReference>
<dbReference type="GO" id="GO:0016055">
    <property type="term" value="P:Wnt signaling pathway"/>
    <property type="evidence" value="ECO:0000316"/>
    <property type="project" value="ZFIN"/>
</dbReference>
<dbReference type="FunFam" id="1.10.238.10:FF:000579">
    <property type="entry name" value="NKD2, WNT signaling pathway inhibitor"/>
    <property type="match status" value="1"/>
</dbReference>
<dbReference type="Gene3D" id="1.10.238.10">
    <property type="entry name" value="EF-hand"/>
    <property type="match status" value="1"/>
</dbReference>
<dbReference type="InterPro" id="IPR011992">
    <property type="entry name" value="EF-hand-dom_pair"/>
</dbReference>
<dbReference type="InterPro" id="IPR018247">
    <property type="entry name" value="EF_Hand_1_Ca_BS"/>
</dbReference>
<dbReference type="InterPro" id="IPR002048">
    <property type="entry name" value="EF_hand_dom"/>
</dbReference>
<dbReference type="InterPro" id="IPR040140">
    <property type="entry name" value="Nkd-like"/>
</dbReference>
<dbReference type="PANTHER" id="PTHR22611">
    <property type="entry name" value="PROTEIN NAKED CUTICLE"/>
    <property type="match status" value="1"/>
</dbReference>
<dbReference type="PANTHER" id="PTHR22611:SF1">
    <property type="entry name" value="PROTEIN NAKED CUTICLE HOMOLOG 2"/>
    <property type="match status" value="1"/>
</dbReference>
<dbReference type="SUPFAM" id="SSF47473">
    <property type="entry name" value="EF-hand"/>
    <property type="match status" value="1"/>
</dbReference>
<dbReference type="PROSITE" id="PS00018">
    <property type="entry name" value="EF_HAND_1"/>
    <property type="match status" value="1"/>
</dbReference>
<dbReference type="PROSITE" id="PS50222">
    <property type="entry name" value="EF_HAND_2"/>
    <property type="match status" value="1"/>
</dbReference>
<proteinExistence type="evidence at transcript level"/>
<protein>
    <recommendedName>
        <fullName>Protein naked cuticle homolog 2</fullName>
        <shortName>Naked-2</shortName>
    </recommendedName>
    <alternativeName>
        <fullName>Protein naked cuticle homolog 2-A</fullName>
        <shortName>Naked-2A</shortName>
    </alternativeName>
</protein>
<organism>
    <name type="scientific">Danio rerio</name>
    <name type="common">Zebrafish</name>
    <name type="synonym">Brachydanio rerio</name>
    <dbReference type="NCBI Taxonomy" id="7955"/>
    <lineage>
        <taxon>Eukaryota</taxon>
        <taxon>Metazoa</taxon>
        <taxon>Chordata</taxon>
        <taxon>Craniata</taxon>
        <taxon>Vertebrata</taxon>
        <taxon>Euteleostomi</taxon>
        <taxon>Actinopterygii</taxon>
        <taxon>Neopterygii</taxon>
        <taxon>Teleostei</taxon>
        <taxon>Ostariophysi</taxon>
        <taxon>Cypriniformes</taxon>
        <taxon>Danionidae</taxon>
        <taxon>Danioninae</taxon>
        <taxon>Danio</taxon>
    </lineage>
</organism>
<name>NKD2_DANRE</name>
<comment type="function">
    <text evidence="5">Cell autonomous antagonist of both the canonical and non-canonical Wnt signaling pathways.</text>
</comment>
<comment type="subcellular location">
    <subcellularLocation>
        <location evidence="1">Cell membrane</location>
    </subcellularLocation>
    <subcellularLocation>
        <location evidence="1">Cytoplasm</location>
    </subcellularLocation>
</comment>
<comment type="tissue specificity">
    <text evidence="5">Expressed ubiquitously until 1 dpf, when expression becomes confined to the anterior CNS, with slight expression in the developing tail.</text>
</comment>
<comment type="developmental stage">
    <text evidence="5">Expressed both maternally and zygotically.</text>
</comment>
<comment type="similarity">
    <text evidence="6">Belongs to the NKD family.</text>
</comment>
<sequence length="409" mass="47062">MGKLHSKHACKRRENPEGDSFVVNGFIAKRAAEEGERYGNNLKDYKNEELKDSQPTLLHCPLQVVLPPEKAEGCESFLQYLSPDDEERDAQKVTKRISLQDLECNVSLAEDNRQEWVFTLYDFDNSGKVTKEDMSSLMHTIYDVVDASVKHSCNSKRRSLRVKLSVTPEPAARRRDATHTERETSHLSQVEPVRSEEHRSADRRQSTHIRGQTEAHEGNHYCVDENTERRNHYLDLAGIENYTSRFDSSSPDADQDPPSRSSHSQSRPHSQEPETHVYQRRSQLMEPCVAPDPRLRTGPQLIRSRSPKGSSRYPGVIPNVTKTSKCHGHHQPISAGQDVYHLTQQSHTHAHTPSGLQHSHSRRIRSRAREQQALTPVKNTNATALVQRHEHHHHHEHHHHHHYHHYHQT</sequence>
<feature type="initiator methionine" description="Removed" evidence="2">
    <location>
        <position position="1"/>
    </location>
</feature>
<feature type="chain" id="PRO_0000301995" description="Protein naked cuticle homolog 2">
    <location>
        <begin position="2"/>
        <end position="409"/>
    </location>
</feature>
<feature type="domain" description="EF-hand" evidence="3">
    <location>
        <begin position="109"/>
        <end position="144"/>
    </location>
</feature>
<feature type="region of interest" description="Disordered" evidence="4">
    <location>
        <begin position="160"/>
        <end position="224"/>
    </location>
</feature>
<feature type="region of interest" description="Disordered" evidence="4">
    <location>
        <begin position="243"/>
        <end position="315"/>
    </location>
</feature>
<feature type="region of interest" description="Disordered" evidence="4">
    <location>
        <begin position="346"/>
        <end position="366"/>
    </location>
</feature>
<feature type="region of interest" description="Disordered" evidence="4">
    <location>
        <begin position="388"/>
        <end position="409"/>
    </location>
</feature>
<feature type="compositionally biased region" description="Basic and acidic residues" evidence="4">
    <location>
        <begin position="171"/>
        <end position="185"/>
    </location>
</feature>
<feature type="compositionally biased region" description="Basic and acidic residues" evidence="4">
    <location>
        <begin position="193"/>
        <end position="224"/>
    </location>
</feature>
<feature type="compositionally biased region" description="Low complexity" evidence="4">
    <location>
        <begin position="247"/>
        <end position="268"/>
    </location>
</feature>
<feature type="compositionally biased region" description="Basic residues" evidence="4">
    <location>
        <begin position="389"/>
        <end position="409"/>
    </location>
</feature>
<feature type="binding site" evidence="3">
    <location>
        <position position="122"/>
    </location>
    <ligand>
        <name>Ca(2+)</name>
        <dbReference type="ChEBI" id="CHEBI:29108"/>
    </ligand>
</feature>
<feature type="binding site" evidence="3">
    <location>
        <position position="124"/>
    </location>
    <ligand>
        <name>Ca(2+)</name>
        <dbReference type="ChEBI" id="CHEBI:29108"/>
    </ligand>
</feature>
<feature type="binding site" evidence="3">
    <location>
        <position position="126"/>
    </location>
    <ligand>
        <name>Ca(2+)</name>
        <dbReference type="ChEBI" id="CHEBI:29108"/>
    </ligand>
</feature>
<feature type="binding site" evidence="3">
    <location>
        <position position="128"/>
    </location>
    <ligand>
        <name>Ca(2+)</name>
        <dbReference type="ChEBI" id="CHEBI:29108"/>
    </ligand>
</feature>
<feature type="binding site" evidence="3">
    <location>
        <position position="133"/>
    </location>
    <ligand>
        <name>Ca(2+)</name>
        <dbReference type="ChEBI" id="CHEBI:29108"/>
    </ligand>
</feature>
<feature type="lipid moiety-binding region" description="N-myristoyl glycine" evidence="2">
    <location>
        <position position="2"/>
    </location>
</feature>
<accession>A4ZNR4</accession>